<protein>
    <recommendedName>
        <fullName evidence="1">Transcription elongation factor GreA</fullName>
    </recommendedName>
    <alternativeName>
        <fullName evidence="1">Transcript cleavage factor GreA</fullName>
    </alternativeName>
</protein>
<name>GREA_SULNB</name>
<keyword id="KW-0175">Coiled coil</keyword>
<keyword id="KW-0238">DNA-binding</keyword>
<keyword id="KW-0804">Transcription</keyword>
<keyword id="KW-0805">Transcription regulation</keyword>
<feature type="chain" id="PRO_1000034316" description="Transcription elongation factor GreA">
    <location>
        <begin position="1"/>
        <end position="162"/>
    </location>
</feature>
<feature type="coiled-coil region" evidence="1">
    <location>
        <begin position="1"/>
        <end position="28"/>
    </location>
</feature>
<proteinExistence type="inferred from homology"/>
<accession>A6Q9U9</accession>
<comment type="function">
    <text evidence="1">Necessary for efficient RNA polymerase transcription elongation past template-encoded arresting sites. The arresting sites in DNA have the property of trapping a certain fraction of elongating RNA polymerases that pass through, resulting in locked ternary complexes. Cleavage of the nascent transcript by cleavage factors such as GreA or GreB allows the resumption of elongation from the new 3'terminus. GreA releases sequences of 2 to 3 nucleotides.</text>
</comment>
<comment type="similarity">
    <text evidence="1">Belongs to the GreA/GreB family.</text>
</comment>
<organism>
    <name type="scientific">Sulfurovum sp. (strain NBC37-1)</name>
    <dbReference type="NCBI Taxonomy" id="387093"/>
    <lineage>
        <taxon>Bacteria</taxon>
        <taxon>Pseudomonadati</taxon>
        <taxon>Campylobacterota</taxon>
        <taxon>Epsilonproteobacteria</taxon>
        <taxon>Campylobacterales</taxon>
        <taxon>Sulfurovaceae</taxon>
        <taxon>Sulfurovum</taxon>
    </lineage>
</organism>
<gene>
    <name evidence="1" type="primary">greA</name>
    <name type="ordered locus">SUN_1305</name>
</gene>
<sequence>MQKEPMLEETYRKLSEELEQLKSVERGVIAKVIDEARELGDLKENAEYHAAKDKQGLMEARIAELTDVVGRAQVVDPSTFSHDRVSFGSTVVLVDQDTDEEVRYTIVGGQESNPQSGLISIQSPMARVLIGKEEGDEVELTLPSGKKTYDIEEILYEEITLG</sequence>
<evidence type="ECO:0000255" key="1">
    <source>
        <dbReference type="HAMAP-Rule" id="MF_00105"/>
    </source>
</evidence>
<dbReference type="EMBL" id="AP009179">
    <property type="protein sequence ID" value="BAF72258.1"/>
    <property type="molecule type" value="Genomic_DNA"/>
</dbReference>
<dbReference type="RefSeq" id="WP_011980991.1">
    <property type="nucleotide sequence ID" value="NC_009663.1"/>
</dbReference>
<dbReference type="SMR" id="A6Q9U9"/>
<dbReference type="STRING" id="387093.SUN_1305"/>
<dbReference type="KEGG" id="sun:SUN_1305"/>
<dbReference type="eggNOG" id="COG0782">
    <property type="taxonomic scope" value="Bacteria"/>
</dbReference>
<dbReference type="HOGENOM" id="CLU_101379_2_0_7"/>
<dbReference type="OrthoDB" id="9808774at2"/>
<dbReference type="Proteomes" id="UP000006378">
    <property type="component" value="Chromosome"/>
</dbReference>
<dbReference type="GO" id="GO:0003677">
    <property type="term" value="F:DNA binding"/>
    <property type="evidence" value="ECO:0007669"/>
    <property type="project" value="UniProtKB-UniRule"/>
</dbReference>
<dbReference type="GO" id="GO:0070063">
    <property type="term" value="F:RNA polymerase binding"/>
    <property type="evidence" value="ECO:0007669"/>
    <property type="project" value="InterPro"/>
</dbReference>
<dbReference type="GO" id="GO:0006354">
    <property type="term" value="P:DNA-templated transcription elongation"/>
    <property type="evidence" value="ECO:0007669"/>
    <property type="project" value="TreeGrafter"/>
</dbReference>
<dbReference type="GO" id="GO:0032784">
    <property type="term" value="P:regulation of DNA-templated transcription elongation"/>
    <property type="evidence" value="ECO:0007669"/>
    <property type="project" value="UniProtKB-UniRule"/>
</dbReference>
<dbReference type="FunFam" id="1.10.287.180:FF:000001">
    <property type="entry name" value="Transcription elongation factor GreA"/>
    <property type="match status" value="1"/>
</dbReference>
<dbReference type="FunFam" id="3.10.50.30:FF:000001">
    <property type="entry name" value="Transcription elongation factor GreA"/>
    <property type="match status" value="1"/>
</dbReference>
<dbReference type="Gene3D" id="3.10.50.30">
    <property type="entry name" value="Transcription elongation factor, GreA/GreB, C-terminal domain"/>
    <property type="match status" value="1"/>
</dbReference>
<dbReference type="Gene3D" id="1.10.287.180">
    <property type="entry name" value="Transcription elongation factor, GreA/GreB, N-terminal domain"/>
    <property type="match status" value="1"/>
</dbReference>
<dbReference type="HAMAP" id="MF_00105">
    <property type="entry name" value="GreA_GreB"/>
    <property type="match status" value="1"/>
</dbReference>
<dbReference type="InterPro" id="IPR036953">
    <property type="entry name" value="GreA/GreB_C_sf"/>
</dbReference>
<dbReference type="InterPro" id="IPR018151">
    <property type="entry name" value="TF_GreA/GreB_CS"/>
</dbReference>
<dbReference type="InterPro" id="IPR006359">
    <property type="entry name" value="Tscrpt_elong_fac_GreA"/>
</dbReference>
<dbReference type="InterPro" id="IPR028624">
    <property type="entry name" value="Tscrpt_elong_fac_GreA/B"/>
</dbReference>
<dbReference type="InterPro" id="IPR001437">
    <property type="entry name" value="Tscrpt_elong_fac_GreA/B_C"/>
</dbReference>
<dbReference type="InterPro" id="IPR023459">
    <property type="entry name" value="Tscrpt_elong_fac_GreA/B_fam"/>
</dbReference>
<dbReference type="InterPro" id="IPR022691">
    <property type="entry name" value="Tscrpt_elong_fac_GreA/B_N"/>
</dbReference>
<dbReference type="InterPro" id="IPR036805">
    <property type="entry name" value="Tscrpt_elong_fac_GreA/B_N_sf"/>
</dbReference>
<dbReference type="NCBIfam" id="TIGR01462">
    <property type="entry name" value="greA"/>
    <property type="match status" value="1"/>
</dbReference>
<dbReference type="NCBIfam" id="NF001261">
    <property type="entry name" value="PRK00226.1-2"/>
    <property type="match status" value="1"/>
</dbReference>
<dbReference type="NCBIfam" id="NF001263">
    <property type="entry name" value="PRK00226.1-4"/>
    <property type="match status" value="1"/>
</dbReference>
<dbReference type="PANTHER" id="PTHR30437">
    <property type="entry name" value="TRANSCRIPTION ELONGATION FACTOR GREA"/>
    <property type="match status" value="1"/>
</dbReference>
<dbReference type="PANTHER" id="PTHR30437:SF4">
    <property type="entry name" value="TRANSCRIPTION ELONGATION FACTOR GREA"/>
    <property type="match status" value="1"/>
</dbReference>
<dbReference type="Pfam" id="PF01272">
    <property type="entry name" value="GreA_GreB"/>
    <property type="match status" value="1"/>
</dbReference>
<dbReference type="Pfam" id="PF03449">
    <property type="entry name" value="GreA_GreB_N"/>
    <property type="match status" value="1"/>
</dbReference>
<dbReference type="PIRSF" id="PIRSF006092">
    <property type="entry name" value="GreA_GreB"/>
    <property type="match status" value="1"/>
</dbReference>
<dbReference type="SUPFAM" id="SSF54534">
    <property type="entry name" value="FKBP-like"/>
    <property type="match status" value="1"/>
</dbReference>
<dbReference type="SUPFAM" id="SSF46557">
    <property type="entry name" value="GreA transcript cleavage protein, N-terminal domain"/>
    <property type="match status" value="1"/>
</dbReference>
<dbReference type="PROSITE" id="PS00829">
    <property type="entry name" value="GREAB_1"/>
    <property type="match status" value="1"/>
</dbReference>
<reference key="1">
    <citation type="journal article" date="2007" name="Proc. Natl. Acad. Sci. U.S.A.">
        <title>Deep-sea vent epsilon-proteobacterial genomes provide insights into emergence of pathogens.</title>
        <authorList>
            <person name="Nakagawa S."/>
            <person name="Takaki Y."/>
            <person name="Shimamura S."/>
            <person name="Reysenbach A.-L."/>
            <person name="Takai K."/>
            <person name="Horikoshi K."/>
        </authorList>
    </citation>
    <scope>NUCLEOTIDE SEQUENCE [LARGE SCALE GENOMIC DNA]</scope>
    <source>
        <strain>NBC37-1</strain>
    </source>
</reference>